<protein>
    <recommendedName>
        <fullName evidence="1">sn-glycerol-3-phosphate-binding periplasmic protein UgpB</fullName>
    </recommendedName>
</protein>
<feature type="signal peptide" evidence="2">
    <location>
        <begin position="1"/>
        <end position="30"/>
    </location>
</feature>
<feature type="chain" id="PRO_0000292812" description="sn-glycerol-3-phosphate-binding periplasmic protein UgpB">
    <location>
        <begin position="31"/>
        <end position="444"/>
    </location>
</feature>
<feature type="binding site" evidence="1">
    <location>
        <position position="72"/>
    </location>
    <ligand>
        <name>sn-glycerol 3-phosphate</name>
        <dbReference type="ChEBI" id="CHEBI:57597"/>
    </ligand>
</feature>
<feature type="binding site" evidence="1">
    <location>
        <position position="96"/>
    </location>
    <ligand>
        <name>sn-glycerol 3-phosphate</name>
        <dbReference type="ChEBI" id="CHEBI:57597"/>
    </ligand>
</feature>
<feature type="binding site" evidence="1">
    <location>
        <position position="151"/>
    </location>
    <ligand>
        <name>sn-glycerol 3-phosphate</name>
        <dbReference type="ChEBI" id="CHEBI:57597"/>
    </ligand>
</feature>
<feature type="binding site" evidence="1">
    <location>
        <position position="277"/>
    </location>
    <ligand>
        <name>sn-glycerol 3-phosphate</name>
        <dbReference type="ChEBI" id="CHEBI:57597"/>
    </ligand>
</feature>
<feature type="binding site" evidence="1">
    <location>
        <position position="314"/>
    </location>
    <ligand>
        <name>sn-glycerol 3-phosphate</name>
        <dbReference type="ChEBI" id="CHEBI:57597"/>
    </ligand>
</feature>
<feature type="binding site" evidence="1">
    <location>
        <position position="353"/>
    </location>
    <ligand>
        <name>sn-glycerol 3-phosphate</name>
        <dbReference type="ChEBI" id="CHEBI:57597"/>
    </ligand>
</feature>
<feature type="binding site" evidence="1">
    <location>
        <position position="404"/>
    </location>
    <ligand>
        <name>sn-glycerol 3-phosphate</name>
        <dbReference type="ChEBI" id="CHEBI:57597"/>
    </ligand>
</feature>
<organism>
    <name type="scientific">Pectobacterium atrosepticum (strain SCRI 1043 / ATCC BAA-672)</name>
    <name type="common">Erwinia carotovora subsp. atroseptica</name>
    <dbReference type="NCBI Taxonomy" id="218491"/>
    <lineage>
        <taxon>Bacteria</taxon>
        <taxon>Pseudomonadati</taxon>
        <taxon>Pseudomonadota</taxon>
        <taxon>Gammaproteobacteria</taxon>
        <taxon>Enterobacterales</taxon>
        <taxon>Pectobacteriaceae</taxon>
        <taxon>Pectobacterium</taxon>
    </lineage>
</organism>
<sequence length="444" mass="48918">MFNNTIRKTHAIRTAAACVAFALMSAGAQAATDIPFWHSMEGELGKEVNSLADRFNKEHTDVKIVPVYKGNYEQNLAAGIAAYRAGNAPAILQVYEVGTATMMASKAIKPVYEVFKDAGINFDESVFVPTVSGYYTDAKSGHLLSQPFNSSTPVLYYNKDAFKKAGLDPEQPPKTWQQMADYTAKLRSAGMKCGYASGWQGWIQIENFSAWNGLPVATKNNGFDGTDTVLEFNKPTQVKHIQLLQDMNKKGDFTYFGRKDEPTEKFYNGECAMTTASSGSLANIREHAKFNYGVGMMPYDADAKGAPQNAIIGGASLWVMGGKDAATYKGVAEFMQFLAKPENAAEWHQKTGYLPITTAAYELTQKQGFYEKNPGADIATRQMLNKPPLPFTKGMRLGNMPQIRTVVDEELESVWTGKKTPQQALDSAVERGNALLRRFEQSTK</sequence>
<dbReference type="EMBL" id="BX950851">
    <property type="protein sequence ID" value="CAG77219.1"/>
    <property type="molecule type" value="Genomic_DNA"/>
</dbReference>
<dbReference type="RefSeq" id="WP_011095786.1">
    <property type="nucleotide sequence ID" value="NC_004547.2"/>
</dbReference>
<dbReference type="SMR" id="Q6CZ31"/>
<dbReference type="STRING" id="218491.ECA4322"/>
<dbReference type="GeneID" id="57211016"/>
<dbReference type="KEGG" id="eca:ECA4322"/>
<dbReference type="PATRIC" id="fig|218491.5.peg.4402"/>
<dbReference type="eggNOG" id="COG1653">
    <property type="taxonomic scope" value="Bacteria"/>
</dbReference>
<dbReference type="HOGENOM" id="CLU_031285_3_0_6"/>
<dbReference type="OrthoDB" id="4393730at2"/>
<dbReference type="Proteomes" id="UP000007966">
    <property type="component" value="Chromosome"/>
</dbReference>
<dbReference type="GO" id="GO:0030313">
    <property type="term" value="C:cell envelope"/>
    <property type="evidence" value="ECO:0007669"/>
    <property type="project" value="UniProtKB-ARBA"/>
</dbReference>
<dbReference type="GO" id="GO:0042597">
    <property type="term" value="C:periplasmic space"/>
    <property type="evidence" value="ECO:0007669"/>
    <property type="project" value="UniProtKB-SubCell"/>
</dbReference>
<dbReference type="GO" id="GO:0055085">
    <property type="term" value="P:transmembrane transport"/>
    <property type="evidence" value="ECO:0007669"/>
    <property type="project" value="InterPro"/>
</dbReference>
<dbReference type="CDD" id="cd14748">
    <property type="entry name" value="PBP2_UgpB"/>
    <property type="match status" value="1"/>
</dbReference>
<dbReference type="Gene3D" id="3.40.190.10">
    <property type="entry name" value="Periplasmic binding protein-like II"/>
    <property type="match status" value="2"/>
</dbReference>
<dbReference type="InterPro" id="IPR050490">
    <property type="entry name" value="Bact_solute-bd_prot1"/>
</dbReference>
<dbReference type="InterPro" id="IPR006059">
    <property type="entry name" value="SBP"/>
</dbReference>
<dbReference type="InterPro" id="IPR006061">
    <property type="entry name" value="SBP_1_CS"/>
</dbReference>
<dbReference type="NCBIfam" id="NF008211">
    <property type="entry name" value="PRK10974.1"/>
    <property type="match status" value="1"/>
</dbReference>
<dbReference type="PANTHER" id="PTHR43649">
    <property type="entry name" value="ARABINOSE-BINDING PROTEIN-RELATED"/>
    <property type="match status" value="1"/>
</dbReference>
<dbReference type="PANTHER" id="PTHR43649:SF31">
    <property type="entry name" value="SN-GLYCEROL-3-PHOSPHATE-BINDING PERIPLASMIC PROTEIN UGPB"/>
    <property type="match status" value="1"/>
</dbReference>
<dbReference type="Pfam" id="PF13416">
    <property type="entry name" value="SBP_bac_8"/>
    <property type="match status" value="1"/>
</dbReference>
<dbReference type="SUPFAM" id="SSF53850">
    <property type="entry name" value="Periplasmic binding protein-like II"/>
    <property type="match status" value="1"/>
</dbReference>
<dbReference type="PROSITE" id="PS01037">
    <property type="entry name" value="SBP_BACTERIAL_1"/>
    <property type="match status" value="1"/>
</dbReference>
<gene>
    <name type="primary">ugpB</name>
    <name type="ordered locus">ECA4322</name>
</gene>
<name>UGPB_PECAS</name>
<comment type="function">
    <text evidence="1">Part of the ABC transporter complex UgpBAEC involved in sn-glycerol-3-phosphate (G3P) import. Binds G3P.</text>
</comment>
<comment type="subunit">
    <text evidence="1">The complex is composed of two ATP-binding proteins (UgpC), two transmembrane proteins (UgpA and UgpE) and a solute-binding protein (UgpB).</text>
</comment>
<comment type="subcellular location">
    <subcellularLocation>
        <location evidence="1">Periplasm</location>
    </subcellularLocation>
</comment>
<comment type="similarity">
    <text evidence="3">Belongs to the bacterial solute-binding protein 1 family.</text>
</comment>
<proteinExistence type="inferred from homology"/>
<accession>Q6CZ31</accession>
<evidence type="ECO:0000250" key="1">
    <source>
        <dbReference type="UniProtKB" id="P0AG80"/>
    </source>
</evidence>
<evidence type="ECO:0000255" key="2"/>
<evidence type="ECO:0000305" key="3"/>
<keyword id="KW-0574">Periplasm</keyword>
<keyword id="KW-1185">Reference proteome</keyword>
<keyword id="KW-0732">Signal</keyword>
<keyword id="KW-0813">Transport</keyword>
<reference key="1">
    <citation type="journal article" date="2004" name="Proc. Natl. Acad. Sci. U.S.A.">
        <title>Genome sequence of the enterobacterial phytopathogen Erwinia carotovora subsp. atroseptica and characterization of virulence factors.</title>
        <authorList>
            <person name="Bell K.S."/>
            <person name="Sebaihia M."/>
            <person name="Pritchard L."/>
            <person name="Holden M.T.G."/>
            <person name="Hyman L.J."/>
            <person name="Holeva M.C."/>
            <person name="Thomson N.R."/>
            <person name="Bentley S.D."/>
            <person name="Churcher L.J.C."/>
            <person name="Mungall K."/>
            <person name="Atkin R."/>
            <person name="Bason N."/>
            <person name="Brooks K."/>
            <person name="Chillingworth T."/>
            <person name="Clark K."/>
            <person name="Doggett J."/>
            <person name="Fraser A."/>
            <person name="Hance Z."/>
            <person name="Hauser H."/>
            <person name="Jagels K."/>
            <person name="Moule S."/>
            <person name="Norbertczak H."/>
            <person name="Ormond D."/>
            <person name="Price C."/>
            <person name="Quail M.A."/>
            <person name="Sanders M."/>
            <person name="Walker D."/>
            <person name="Whitehead S."/>
            <person name="Salmond G.P.C."/>
            <person name="Birch P.R.J."/>
            <person name="Parkhill J."/>
            <person name="Toth I.K."/>
        </authorList>
    </citation>
    <scope>NUCLEOTIDE SEQUENCE [LARGE SCALE GENOMIC DNA]</scope>
    <source>
        <strain>SCRI 1043 / ATCC BAA-672</strain>
    </source>
</reference>